<gene>
    <name evidence="1" type="primary">ligA</name>
    <name type="ordered locus">ECED1_2855</name>
</gene>
<accession>B7MY64</accession>
<organism>
    <name type="scientific">Escherichia coli O81 (strain ED1a)</name>
    <dbReference type="NCBI Taxonomy" id="585397"/>
    <lineage>
        <taxon>Bacteria</taxon>
        <taxon>Pseudomonadati</taxon>
        <taxon>Pseudomonadota</taxon>
        <taxon>Gammaproteobacteria</taxon>
        <taxon>Enterobacterales</taxon>
        <taxon>Enterobacteriaceae</taxon>
        <taxon>Escherichia</taxon>
    </lineage>
</organism>
<name>DNLJ_ECO81</name>
<comment type="function">
    <text evidence="1">DNA ligase that catalyzes the formation of phosphodiester linkages between 5'-phosphoryl and 3'-hydroxyl groups in double-stranded DNA using NAD as a coenzyme and as the energy source for the reaction. It is essential for DNA replication and repair of damaged DNA.</text>
</comment>
<comment type="catalytic activity">
    <reaction evidence="1">
        <text>NAD(+) + (deoxyribonucleotide)n-3'-hydroxyl + 5'-phospho-(deoxyribonucleotide)m = (deoxyribonucleotide)n+m + AMP + beta-nicotinamide D-nucleotide.</text>
        <dbReference type="EC" id="6.5.1.2"/>
    </reaction>
</comment>
<comment type="cofactor">
    <cofactor evidence="1">
        <name>Mg(2+)</name>
        <dbReference type="ChEBI" id="CHEBI:18420"/>
    </cofactor>
    <cofactor evidence="1">
        <name>Mn(2+)</name>
        <dbReference type="ChEBI" id="CHEBI:29035"/>
    </cofactor>
</comment>
<comment type="similarity">
    <text evidence="1">Belongs to the NAD-dependent DNA ligase family. LigA subfamily.</text>
</comment>
<evidence type="ECO:0000255" key="1">
    <source>
        <dbReference type="HAMAP-Rule" id="MF_01588"/>
    </source>
</evidence>
<reference key="1">
    <citation type="journal article" date="2009" name="PLoS Genet.">
        <title>Organised genome dynamics in the Escherichia coli species results in highly diverse adaptive paths.</title>
        <authorList>
            <person name="Touchon M."/>
            <person name="Hoede C."/>
            <person name="Tenaillon O."/>
            <person name="Barbe V."/>
            <person name="Baeriswyl S."/>
            <person name="Bidet P."/>
            <person name="Bingen E."/>
            <person name="Bonacorsi S."/>
            <person name="Bouchier C."/>
            <person name="Bouvet O."/>
            <person name="Calteau A."/>
            <person name="Chiapello H."/>
            <person name="Clermont O."/>
            <person name="Cruveiller S."/>
            <person name="Danchin A."/>
            <person name="Diard M."/>
            <person name="Dossat C."/>
            <person name="Karoui M.E."/>
            <person name="Frapy E."/>
            <person name="Garry L."/>
            <person name="Ghigo J.M."/>
            <person name="Gilles A.M."/>
            <person name="Johnson J."/>
            <person name="Le Bouguenec C."/>
            <person name="Lescat M."/>
            <person name="Mangenot S."/>
            <person name="Martinez-Jehanne V."/>
            <person name="Matic I."/>
            <person name="Nassif X."/>
            <person name="Oztas S."/>
            <person name="Petit M.A."/>
            <person name="Pichon C."/>
            <person name="Rouy Z."/>
            <person name="Ruf C.S."/>
            <person name="Schneider D."/>
            <person name="Tourret J."/>
            <person name="Vacherie B."/>
            <person name="Vallenet D."/>
            <person name="Medigue C."/>
            <person name="Rocha E.P.C."/>
            <person name="Denamur E."/>
        </authorList>
    </citation>
    <scope>NUCLEOTIDE SEQUENCE [LARGE SCALE GENOMIC DNA]</scope>
    <source>
        <strain>ED1a</strain>
    </source>
</reference>
<keyword id="KW-0227">DNA damage</keyword>
<keyword id="KW-0234">DNA repair</keyword>
<keyword id="KW-0235">DNA replication</keyword>
<keyword id="KW-0436">Ligase</keyword>
<keyword id="KW-0460">Magnesium</keyword>
<keyword id="KW-0464">Manganese</keyword>
<keyword id="KW-0479">Metal-binding</keyword>
<keyword id="KW-0520">NAD</keyword>
<keyword id="KW-0862">Zinc</keyword>
<dbReference type="EC" id="6.5.1.2" evidence="1"/>
<dbReference type="EMBL" id="CU928162">
    <property type="protein sequence ID" value="CAR09030.2"/>
    <property type="molecule type" value="Genomic_DNA"/>
</dbReference>
<dbReference type="RefSeq" id="WP_000443706.1">
    <property type="nucleotide sequence ID" value="NC_011745.1"/>
</dbReference>
<dbReference type="SMR" id="B7MY64"/>
<dbReference type="KEGG" id="ecq:ECED1_2855"/>
<dbReference type="HOGENOM" id="CLU_007764_2_1_6"/>
<dbReference type="Proteomes" id="UP000000748">
    <property type="component" value="Chromosome"/>
</dbReference>
<dbReference type="GO" id="GO:0005829">
    <property type="term" value="C:cytosol"/>
    <property type="evidence" value="ECO:0007669"/>
    <property type="project" value="TreeGrafter"/>
</dbReference>
<dbReference type="GO" id="GO:0003677">
    <property type="term" value="F:DNA binding"/>
    <property type="evidence" value="ECO:0007669"/>
    <property type="project" value="InterPro"/>
</dbReference>
<dbReference type="GO" id="GO:0003911">
    <property type="term" value="F:DNA ligase (NAD+) activity"/>
    <property type="evidence" value="ECO:0007669"/>
    <property type="project" value="UniProtKB-UniRule"/>
</dbReference>
<dbReference type="GO" id="GO:0046872">
    <property type="term" value="F:metal ion binding"/>
    <property type="evidence" value="ECO:0007669"/>
    <property type="project" value="UniProtKB-KW"/>
</dbReference>
<dbReference type="GO" id="GO:0006281">
    <property type="term" value="P:DNA repair"/>
    <property type="evidence" value="ECO:0007669"/>
    <property type="project" value="UniProtKB-KW"/>
</dbReference>
<dbReference type="GO" id="GO:0006260">
    <property type="term" value="P:DNA replication"/>
    <property type="evidence" value="ECO:0007669"/>
    <property type="project" value="UniProtKB-KW"/>
</dbReference>
<dbReference type="CDD" id="cd17748">
    <property type="entry name" value="BRCT_DNA_ligase_like"/>
    <property type="match status" value="1"/>
</dbReference>
<dbReference type="CDD" id="cd00114">
    <property type="entry name" value="LIGANc"/>
    <property type="match status" value="1"/>
</dbReference>
<dbReference type="FunFam" id="1.10.150.20:FF:000006">
    <property type="entry name" value="DNA ligase"/>
    <property type="match status" value="1"/>
</dbReference>
<dbReference type="FunFam" id="1.10.150.20:FF:000007">
    <property type="entry name" value="DNA ligase"/>
    <property type="match status" value="1"/>
</dbReference>
<dbReference type="FunFam" id="1.10.287.610:FF:000002">
    <property type="entry name" value="DNA ligase"/>
    <property type="match status" value="1"/>
</dbReference>
<dbReference type="FunFam" id="2.40.50.140:FF:000012">
    <property type="entry name" value="DNA ligase"/>
    <property type="match status" value="1"/>
</dbReference>
<dbReference type="FunFam" id="3.30.470.30:FF:000001">
    <property type="entry name" value="DNA ligase"/>
    <property type="match status" value="1"/>
</dbReference>
<dbReference type="FunFam" id="3.40.50.10190:FF:000004">
    <property type="entry name" value="DNA ligase"/>
    <property type="match status" value="1"/>
</dbReference>
<dbReference type="FunFam" id="6.20.10.30:FF:000001">
    <property type="entry name" value="DNA ligase"/>
    <property type="match status" value="1"/>
</dbReference>
<dbReference type="Gene3D" id="6.20.10.30">
    <property type="match status" value="1"/>
</dbReference>
<dbReference type="Gene3D" id="1.10.150.20">
    <property type="entry name" value="5' to 3' exonuclease, C-terminal subdomain"/>
    <property type="match status" value="2"/>
</dbReference>
<dbReference type="Gene3D" id="3.40.50.10190">
    <property type="entry name" value="BRCT domain"/>
    <property type="match status" value="1"/>
</dbReference>
<dbReference type="Gene3D" id="3.30.470.30">
    <property type="entry name" value="DNA ligase/mRNA capping enzyme"/>
    <property type="match status" value="1"/>
</dbReference>
<dbReference type="Gene3D" id="1.10.287.610">
    <property type="entry name" value="Helix hairpin bin"/>
    <property type="match status" value="1"/>
</dbReference>
<dbReference type="Gene3D" id="2.40.50.140">
    <property type="entry name" value="Nucleic acid-binding proteins"/>
    <property type="match status" value="1"/>
</dbReference>
<dbReference type="HAMAP" id="MF_01588">
    <property type="entry name" value="DNA_ligase_A"/>
    <property type="match status" value="1"/>
</dbReference>
<dbReference type="InterPro" id="IPR001357">
    <property type="entry name" value="BRCT_dom"/>
</dbReference>
<dbReference type="InterPro" id="IPR036420">
    <property type="entry name" value="BRCT_dom_sf"/>
</dbReference>
<dbReference type="InterPro" id="IPR041663">
    <property type="entry name" value="DisA/LigA_HHH"/>
</dbReference>
<dbReference type="InterPro" id="IPR001679">
    <property type="entry name" value="DNA_ligase"/>
</dbReference>
<dbReference type="InterPro" id="IPR018239">
    <property type="entry name" value="DNA_ligase_AS"/>
</dbReference>
<dbReference type="InterPro" id="IPR033136">
    <property type="entry name" value="DNA_ligase_CS"/>
</dbReference>
<dbReference type="InterPro" id="IPR013839">
    <property type="entry name" value="DNAligase_adenylation"/>
</dbReference>
<dbReference type="InterPro" id="IPR013840">
    <property type="entry name" value="DNAligase_N"/>
</dbReference>
<dbReference type="InterPro" id="IPR003583">
    <property type="entry name" value="Hlx-hairpin-Hlx_DNA-bd_motif"/>
</dbReference>
<dbReference type="InterPro" id="IPR012340">
    <property type="entry name" value="NA-bd_OB-fold"/>
</dbReference>
<dbReference type="InterPro" id="IPR004150">
    <property type="entry name" value="NAD_DNA_ligase_OB"/>
</dbReference>
<dbReference type="InterPro" id="IPR010994">
    <property type="entry name" value="RuvA_2-like"/>
</dbReference>
<dbReference type="InterPro" id="IPR004149">
    <property type="entry name" value="Znf_DNAligase_C4"/>
</dbReference>
<dbReference type="NCBIfam" id="TIGR00575">
    <property type="entry name" value="dnlj"/>
    <property type="match status" value="1"/>
</dbReference>
<dbReference type="NCBIfam" id="NF005932">
    <property type="entry name" value="PRK07956.1"/>
    <property type="match status" value="1"/>
</dbReference>
<dbReference type="PANTHER" id="PTHR23389">
    <property type="entry name" value="CHROMOSOME TRANSMISSION FIDELITY FACTOR 18"/>
    <property type="match status" value="1"/>
</dbReference>
<dbReference type="PANTHER" id="PTHR23389:SF9">
    <property type="entry name" value="DNA LIGASE"/>
    <property type="match status" value="1"/>
</dbReference>
<dbReference type="Pfam" id="PF00533">
    <property type="entry name" value="BRCT"/>
    <property type="match status" value="1"/>
</dbReference>
<dbReference type="Pfam" id="PF01653">
    <property type="entry name" value="DNA_ligase_aden"/>
    <property type="match status" value="1"/>
</dbReference>
<dbReference type="Pfam" id="PF03120">
    <property type="entry name" value="DNA_ligase_OB"/>
    <property type="match status" value="1"/>
</dbReference>
<dbReference type="Pfam" id="PF03119">
    <property type="entry name" value="DNA_ligase_ZBD"/>
    <property type="match status" value="1"/>
</dbReference>
<dbReference type="Pfam" id="PF12826">
    <property type="entry name" value="HHH_2"/>
    <property type="match status" value="1"/>
</dbReference>
<dbReference type="Pfam" id="PF14520">
    <property type="entry name" value="HHH_5"/>
    <property type="match status" value="1"/>
</dbReference>
<dbReference type="Pfam" id="PF22745">
    <property type="entry name" value="Nlig-Ia"/>
    <property type="match status" value="1"/>
</dbReference>
<dbReference type="PIRSF" id="PIRSF001604">
    <property type="entry name" value="LigA"/>
    <property type="match status" value="1"/>
</dbReference>
<dbReference type="SMART" id="SM00292">
    <property type="entry name" value="BRCT"/>
    <property type="match status" value="1"/>
</dbReference>
<dbReference type="SMART" id="SM00278">
    <property type="entry name" value="HhH1"/>
    <property type="match status" value="4"/>
</dbReference>
<dbReference type="SMART" id="SM00532">
    <property type="entry name" value="LIGANc"/>
    <property type="match status" value="1"/>
</dbReference>
<dbReference type="SUPFAM" id="SSF52113">
    <property type="entry name" value="BRCT domain"/>
    <property type="match status" value="1"/>
</dbReference>
<dbReference type="SUPFAM" id="SSF56091">
    <property type="entry name" value="DNA ligase/mRNA capping enzyme, catalytic domain"/>
    <property type="match status" value="1"/>
</dbReference>
<dbReference type="SUPFAM" id="SSF50249">
    <property type="entry name" value="Nucleic acid-binding proteins"/>
    <property type="match status" value="1"/>
</dbReference>
<dbReference type="SUPFAM" id="SSF47781">
    <property type="entry name" value="RuvA domain 2-like"/>
    <property type="match status" value="1"/>
</dbReference>
<dbReference type="PROSITE" id="PS50172">
    <property type="entry name" value="BRCT"/>
    <property type="match status" value="1"/>
</dbReference>
<dbReference type="PROSITE" id="PS01055">
    <property type="entry name" value="DNA_LIGASE_N1"/>
    <property type="match status" value="1"/>
</dbReference>
<dbReference type="PROSITE" id="PS01056">
    <property type="entry name" value="DNA_LIGASE_N2"/>
    <property type="match status" value="1"/>
</dbReference>
<feature type="chain" id="PRO_0000380373" description="DNA ligase">
    <location>
        <begin position="1"/>
        <end position="671"/>
    </location>
</feature>
<feature type="domain" description="BRCT" evidence="1">
    <location>
        <begin position="593"/>
        <end position="671"/>
    </location>
</feature>
<feature type="active site" description="N6-AMP-lysine intermediate" evidence="1">
    <location>
        <position position="115"/>
    </location>
</feature>
<feature type="binding site" evidence="1">
    <location>
        <begin position="32"/>
        <end position="36"/>
    </location>
    <ligand>
        <name>NAD(+)</name>
        <dbReference type="ChEBI" id="CHEBI:57540"/>
    </ligand>
</feature>
<feature type="binding site" evidence="1">
    <location>
        <begin position="81"/>
        <end position="82"/>
    </location>
    <ligand>
        <name>NAD(+)</name>
        <dbReference type="ChEBI" id="CHEBI:57540"/>
    </ligand>
</feature>
<feature type="binding site" evidence="1">
    <location>
        <position position="113"/>
    </location>
    <ligand>
        <name>NAD(+)</name>
        <dbReference type="ChEBI" id="CHEBI:57540"/>
    </ligand>
</feature>
<feature type="binding site" evidence="1">
    <location>
        <position position="136"/>
    </location>
    <ligand>
        <name>NAD(+)</name>
        <dbReference type="ChEBI" id="CHEBI:57540"/>
    </ligand>
</feature>
<feature type="binding site" evidence="1">
    <location>
        <position position="173"/>
    </location>
    <ligand>
        <name>NAD(+)</name>
        <dbReference type="ChEBI" id="CHEBI:57540"/>
    </ligand>
</feature>
<feature type="binding site" evidence="1">
    <location>
        <position position="290"/>
    </location>
    <ligand>
        <name>NAD(+)</name>
        <dbReference type="ChEBI" id="CHEBI:57540"/>
    </ligand>
</feature>
<feature type="binding site" evidence="1">
    <location>
        <position position="314"/>
    </location>
    <ligand>
        <name>NAD(+)</name>
        <dbReference type="ChEBI" id="CHEBI:57540"/>
    </ligand>
</feature>
<feature type="binding site" evidence="1">
    <location>
        <position position="408"/>
    </location>
    <ligand>
        <name>Zn(2+)</name>
        <dbReference type="ChEBI" id="CHEBI:29105"/>
    </ligand>
</feature>
<feature type="binding site" evidence="1">
    <location>
        <position position="411"/>
    </location>
    <ligand>
        <name>Zn(2+)</name>
        <dbReference type="ChEBI" id="CHEBI:29105"/>
    </ligand>
</feature>
<feature type="binding site" evidence="1">
    <location>
        <position position="426"/>
    </location>
    <ligand>
        <name>Zn(2+)</name>
        <dbReference type="ChEBI" id="CHEBI:29105"/>
    </ligand>
</feature>
<feature type="binding site" evidence="1">
    <location>
        <position position="432"/>
    </location>
    <ligand>
        <name>Zn(2+)</name>
        <dbReference type="ChEBI" id="CHEBI:29105"/>
    </ligand>
</feature>
<proteinExistence type="inferred from homology"/>
<protein>
    <recommendedName>
        <fullName evidence="1">DNA ligase</fullName>
        <ecNumber evidence="1">6.5.1.2</ecNumber>
    </recommendedName>
    <alternativeName>
        <fullName evidence="1">Polydeoxyribonucleotide synthase [NAD(+)]</fullName>
    </alternativeName>
</protein>
<sequence length="671" mass="73644">MESIEQQLTELRTTLRHHEYLYHVMDAPEIPDAEYDRLMRELRELETKHPELITPDSPTQRVGAAPLAAFSQIRHEVPMLSLDNVFDEESFLAFNKRVQDRLKSNEKVTWCCELKLDGLAVSILYENGVLVSAATRGDGTTGEDITSNVRTIRAIPLKLHGENIPARLEVRGEVFLPQAGFEKINEDARRTGGKVFANPRNAAAGSLRQLDPRITAKRPLTFFCYGVGVLEGGELPDTHLGRLMQFKAWGLPVSDRVTLCESAEEVLAFYHEVEKDRPTLGFDIDGVVIKVNSLAQQEQLGFVARAPRWAVAFKFPAQEQMTFVRDVEFQVGRTGAITPVARLEPVHVAGVLVSNATLHNADEIERLGLRIGDKVVIRRAGDVIPQVVNVVLSERPEDTREVVFPTHCPVCGSDVERVEGEAVARCTGGLICGAQRKESLKHFVSRRAMDVDGMGDKIIDQLVEKEYVHTPADLFKLTAGKLTGLERMGLKSAQNVVNALEKAKETTFARFLYALGIREVGEATAAGLAAYFGTLEALEAASIEELQKVPDVGIVVASHVHNFFAEESNRNVISELLAEGVHWPEPIVINAEEIDSPFAGKTVVLTGSLSQMSRDDAKARLVELGAKVAGSVSKKTDLVIAGEAAGSKLAKAQELGIEVIDETEMLRLLGS</sequence>